<evidence type="ECO:0000250" key="1">
    <source>
        <dbReference type="UniProtKB" id="P43672"/>
    </source>
</evidence>
<evidence type="ECO:0000255" key="2">
    <source>
        <dbReference type="HAMAP-Rule" id="MF_00848"/>
    </source>
</evidence>
<accession>Q8K9I3</accession>
<keyword id="KW-0067">ATP-binding</keyword>
<keyword id="KW-0175">Coiled coil</keyword>
<keyword id="KW-0963">Cytoplasm</keyword>
<keyword id="KW-0227">DNA damage</keyword>
<keyword id="KW-0234">DNA repair</keyword>
<keyword id="KW-0238">DNA-binding</keyword>
<keyword id="KW-0378">Hydrolase</keyword>
<keyword id="KW-0547">Nucleotide-binding</keyword>
<keyword id="KW-0677">Repeat</keyword>
<protein>
    <recommendedName>
        <fullName evidence="2">ATP-binding protein Uup</fullName>
        <ecNumber evidence="2">3.6.1.-</ecNumber>
    </recommendedName>
</protein>
<gene>
    <name evidence="2" type="primary">uup</name>
    <name type="ordered locus">BUsg_352</name>
</gene>
<comment type="function">
    <text evidence="2">Probably plays a role in ribosome assembly or function. May be involved in resolution of branched DNA intermediates that result from template switching in postreplication gaps. Binds DNA and has ATPase activity.</text>
</comment>
<comment type="catalytic activity">
    <reaction evidence="2">
        <text>ATP + H2O = ADP + phosphate + H(+)</text>
        <dbReference type="Rhea" id="RHEA:13065"/>
        <dbReference type="ChEBI" id="CHEBI:15377"/>
        <dbReference type="ChEBI" id="CHEBI:15378"/>
        <dbReference type="ChEBI" id="CHEBI:30616"/>
        <dbReference type="ChEBI" id="CHEBI:43474"/>
        <dbReference type="ChEBI" id="CHEBI:456216"/>
    </reaction>
</comment>
<comment type="subcellular location">
    <subcellularLocation>
        <location evidence="2">Cytoplasm</location>
    </subcellularLocation>
    <text evidence="2">Associates with ribosomes.</text>
</comment>
<comment type="domain">
    <text evidence="1">The C-terminal domain (CTD) helps bind DNA.</text>
</comment>
<comment type="similarity">
    <text evidence="2">Belongs to the ABC transporter superfamily. ABCF family. Uup subfamily.</text>
</comment>
<sequence>MPLISIQNAFLAFSDLEILKNAVLYINKKERISLIGKNGAGKSTLLKVINKNQELDHGSIIYQKNIKISYLKQDNPKNLDISIYDFIKNQLKKENNKEININTIVEIKKIIKTFQIDKHSLLSELSGGSLRKVVLGSALLSQPDVLLLDEPTNHLDINTIAWLEKFLKKFSGTTLFISHDRSFIQNLCTRIIDLDRGKLTSFPGDYKEFIKLKKENNRIEKTKKKLFDQHLEKEEIWIRKGIKARTTRNEGRVRNLKVLRKEYKNYKKIENFNNVIINEIKNYSGKIIFKLKNISFFIEKKTIIQSFSSIIQYGDKIGLIGNNGSGKSTMIKILMGEKKIQKGSIHFGTKLNIAYFDQDRSTLDSNKSILENVNNGREKIVLNGKEQHLIGYLKKFLFKPNQMKCLVKNLSGGECNRLLLAKLFLKPSNVLILDEPTNDLDLDTLELLENIIIKYSGTVLIVSHDRNFIENTVNKYWIFKGDGLINTHFSSHNNIIKEKNKKIQKKYVLNPIKSNISFLKTKQNQVKKELKKVLNEIEKIENSIKTLKIQMNEPDFFKQHIKNQLPIVKQFNIEEKKLEKILIYWENLEKKL</sequence>
<proteinExistence type="inferred from homology"/>
<feature type="chain" id="PRO_0000093028" description="ATP-binding protein Uup">
    <location>
        <begin position="1"/>
        <end position="592"/>
    </location>
</feature>
<feature type="domain" description="ABC transporter 1" evidence="2">
    <location>
        <begin position="1"/>
        <end position="221"/>
    </location>
</feature>
<feature type="domain" description="ABC transporter 2" evidence="2">
    <location>
        <begin position="289"/>
        <end position="516"/>
    </location>
</feature>
<feature type="region of interest" description="C-terminal domain (CTD), binds DNA" evidence="1">
    <location>
        <begin position="518"/>
        <end position="592"/>
    </location>
</feature>
<feature type="coiled-coil region" evidence="2">
    <location>
        <begin position="516"/>
        <end position="550"/>
    </location>
</feature>
<feature type="binding site" evidence="2">
    <location>
        <begin position="36"/>
        <end position="43"/>
    </location>
    <ligand>
        <name>ATP</name>
        <dbReference type="ChEBI" id="CHEBI:30616"/>
        <label>1</label>
    </ligand>
</feature>
<feature type="binding site" evidence="2">
    <location>
        <begin position="321"/>
        <end position="328"/>
    </location>
    <ligand>
        <name>ATP</name>
        <dbReference type="ChEBI" id="CHEBI:30616"/>
        <label>2</label>
    </ligand>
</feature>
<name>UUP_BUCAP</name>
<organism>
    <name type="scientific">Buchnera aphidicola subsp. Schizaphis graminum (strain Sg)</name>
    <dbReference type="NCBI Taxonomy" id="198804"/>
    <lineage>
        <taxon>Bacteria</taxon>
        <taxon>Pseudomonadati</taxon>
        <taxon>Pseudomonadota</taxon>
        <taxon>Gammaproteobacteria</taxon>
        <taxon>Enterobacterales</taxon>
        <taxon>Erwiniaceae</taxon>
        <taxon>Buchnera</taxon>
    </lineage>
</organism>
<reference key="1">
    <citation type="journal article" date="2002" name="Science">
        <title>50 million years of genomic stasis in endosymbiotic bacteria.</title>
        <authorList>
            <person name="Tamas I."/>
            <person name="Klasson L."/>
            <person name="Canbaeck B."/>
            <person name="Naeslund A.K."/>
            <person name="Eriksson A.-S."/>
            <person name="Wernegreen J.J."/>
            <person name="Sandstroem J.P."/>
            <person name="Moran N.A."/>
            <person name="Andersson S.G.E."/>
        </authorList>
    </citation>
    <scope>NUCLEOTIDE SEQUENCE [LARGE SCALE GENOMIC DNA]</scope>
    <source>
        <strain>Sg</strain>
    </source>
</reference>
<reference key="2">
    <citation type="journal article" date="2019" name="J. Mol. Biol.">
        <title>ABCF ATPases involved in protein synthesis, ribosome assembly and antibiotic resistance: structural and functional diversification across the tree of life.</title>
        <authorList>
            <person name="Murina V."/>
            <person name="Kasari M."/>
            <person name="Takada H."/>
            <person name="Hinnu M."/>
            <person name="Saha C.K."/>
            <person name="Grimshaw J.W."/>
            <person name="Seki T."/>
            <person name="Reith M."/>
            <person name="Putrins M."/>
            <person name="Tenson T."/>
            <person name="Strahl H."/>
            <person name="Hauryliuk V."/>
            <person name="Atkinson G.C."/>
        </authorList>
    </citation>
    <scope>DISCUSSION OF SEQUENCE</scope>
    <scope>FAMILY</scope>
</reference>
<dbReference type="EC" id="3.6.1.-" evidence="2"/>
<dbReference type="EMBL" id="AE013218">
    <property type="protein sequence ID" value="AAM67905.1"/>
    <property type="molecule type" value="Genomic_DNA"/>
</dbReference>
<dbReference type="RefSeq" id="WP_011053872.1">
    <property type="nucleotide sequence ID" value="NC_004061.1"/>
</dbReference>
<dbReference type="SMR" id="Q8K9I3"/>
<dbReference type="STRING" id="198804.BUsg_352"/>
<dbReference type="GeneID" id="93003822"/>
<dbReference type="KEGG" id="bas:BUsg_352"/>
<dbReference type="eggNOG" id="COG0488">
    <property type="taxonomic scope" value="Bacteria"/>
</dbReference>
<dbReference type="HOGENOM" id="CLU_000604_36_0_6"/>
<dbReference type="Proteomes" id="UP000000416">
    <property type="component" value="Chromosome"/>
</dbReference>
<dbReference type="GO" id="GO:0005737">
    <property type="term" value="C:cytoplasm"/>
    <property type="evidence" value="ECO:0007669"/>
    <property type="project" value="UniProtKB-SubCell"/>
</dbReference>
<dbReference type="GO" id="GO:0005524">
    <property type="term" value="F:ATP binding"/>
    <property type="evidence" value="ECO:0007669"/>
    <property type="project" value="UniProtKB-UniRule"/>
</dbReference>
<dbReference type="GO" id="GO:0016887">
    <property type="term" value="F:ATP hydrolysis activity"/>
    <property type="evidence" value="ECO:0007669"/>
    <property type="project" value="UniProtKB-UniRule"/>
</dbReference>
<dbReference type="GO" id="GO:0003677">
    <property type="term" value="F:DNA binding"/>
    <property type="evidence" value="ECO:0007669"/>
    <property type="project" value="UniProtKB-UniRule"/>
</dbReference>
<dbReference type="GO" id="GO:0043022">
    <property type="term" value="F:ribosome binding"/>
    <property type="evidence" value="ECO:0007669"/>
    <property type="project" value="UniProtKB-UniRule"/>
</dbReference>
<dbReference type="GO" id="GO:0006281">
    <property type="term" value="P:DNA repair"/>
    <property type="evidence" value="ECO:0007669"/>
    <property type="project" value="UniProtKB-KW"/>
</dbReference>
<dbReference type="CDD" id="cd03221">
    <property type="entry name" value="ABCF_EF-3"/>
    <property type="match status" value="2"/>
</dbReference>
<dbReference type="FunFam" id="3.40.50.300:FF:000309">
    <property type="entry name" value="ABC transporter ATP-binding protein"/>
    <property type="match status" value="1"/>
</dbReference>
<dbReference type="FunFam" id="3.40.50.300:FF:000011">
    <property type="entry name" value="Putative ABC transporter ATP-binding component"/>
    <property type="match status" value="1"/>
</dbReference>
<dbReference type="Gene3D" id="3.40.50.300">
    <property type="entry name" value="P-loop containing nucleotide triphosphate hydrolases"/>
    <property type="match status" value="2"/>
</dbReference>
<dbReference type="Gene3D" id="1.10.287.380">
    <property type="entry name" value="Valyl-tRNA synthetase, C-terminal domain"/>
    <property type="match status" value="1"/>
</dbReference>
<dbReference type="HAMAP" id="MF_00848">
    <property type="entry name" value="Uup"/>
    <property type="match status" value="1"/>
</dbReference>
<dbReference type="InterPro" id="IPR003593">
    <property type="entry name" value="AAA+_ATPase"/>
</dbReference>
<dbReference type="InterPro" id="IPR032781">
    <property type="entry name" value="ABC_tran_Xtn"/>
</dbReference>
<dbReference type="InterPro" id="IPR003439">
    <property type="entry name" value="ABC_transporter-like_ATP-bd"/>
</dbReference>
<dbReference type="InterPro" id="IPR017871">
    <property type="entry name" value="ABC_transporter-like_CS"/>
</dbReference>
<dbReference type="InterPro" id="IPR051309">
    <property type="entry name" value="ABCF_ATPase"/>
</dbReference>
<dbReference type="InterPro" id="IPR027417">
    <property type="entry name" value="P-loop_NTPase"/>
</dbReference>
<dbReference type="InterPro" id="IPR043686">
    <property type="entry name" value="Uup"/>
</dbReference>
<dbReference type="InterPro" id="IPR037118">
    <property type="entry name" value="Val-tRNA_synth_C_sf"/>
</dbReference>
<dbReference type="PANTHER" id="PTHR42855">
    <property type="entry name" value="ABC TRANSPORTER ATP-BINDING SUBUNIT"/>
    <property type="match status" value="1"/>
</dbReference>
<dbReference type="PANTHER" id="PTHR42855:SF1">
    <property type="entry name" value="ABC TRANSPORTER DOMAIN-CONTAINING PROTEIN"/>
    <property type="match status" value="1"/>
</dbReference>
<dbReference type="Pfam" id="PF00005">
    <property type="entry name" value="ABC_tran"/>
    <property type="match status" value="2"/>
</dbReference>
<dbReference type="Pfam" id="PF12848">
    <property type="entry name" value="ABC_tran_Xtn"/>
    <property type="match status" value="1"/>
</dbReference>
<dbReference type="SMART" id="SM00382">
    <property type="entry name" value="AAA"/>
    <property type="match status" value="2"/>
</dbReference>
<dbReference type="SUPFAM" id="SSF52540">
    <property type="entry name" value="P-loop containing nucleoside triphosphate hydrolases"/>
    <property type="match status" value="2"/>
</dbReference>
<dbReference type="PROSITE" id="PS00211">
    <property type="entry name" value="ABC_TRANSPORTER_1"/>
    <property type="match status" value="1"/>
</dbReference>
<dbReference type="PROSITE" id="PS50893">
    <property type="entry name" value="ABC_TRANSPORTER_2"/>
    <property type="match status" value="2"/>
</dbReference>